<accession>Q1K730</accession>
<name>RM02_NEUCR</name>
<sequence>MHLAQLRQPLTRAAANSCHSVCRLPTTHSSVSATAILSEQFAHLRIGPSSSNVAVEGRRYASVKAQGAYRLKPKRTIPKKLGAKKTGDQYVIPGNIIYKQRGTLWHPGENTIMGRDHTIHAAVAGYVKYYRDPQLHPDRQYIGVVFNRNDKLPYPKDAPRKRKLGLVAVPRKVEEVEKPTMSASGLPLFVTRHETIEIPPPAVTTPAAAGKAVKGQGARVSASGAAAVPASSSTISASASSNSNNGGSSVIAELIKEKLAARAEYNARQSALRKLQQQKMLARRGTRVLRLMNNYSYRETNWEIGRLIGDPGSVPGTEKVGSRKAKFRARRRRRNTFLLGIKERKLAKADRREEYRRRVREKREQRLVQRKEFLAKQREAKKAREGGAAAEKSEKKEVKAEKPAAAAPKVEKPKAPEAAKKESKPKVEEKKAAAAEPKKDSKTEKKD</sequence>
<comment type="function">
    <text evidence="6">Component of the mitochondrial ribosome (mitoribosome), a dedicated translation machinery responsible for the synthesis of mitochondrial genome-encoded proteins, including at least some of the essential transmembrane subunits of the mitochondrial respiratory chain. The mitoribosomes are attached to the mitochondrial inner membrane and translation products are cotranslationally integrated into the membrane.</text>
</comment>
<comment type="subunit">
    <text evidence="2 3">Component of the mitochondrial large ribosomal subunit (mt-LSU). Mature N.crassa 74S mitochondrial ribosomes consist of a small (37S) and a large (54S) subunit. The 37S small subunit contains a 16S ribosomal RNA (16S mt-rRNA) and 32 different proteins. The 54S large subunit contains a 23S rRNA (23S mt-rRNA) and 42 different proteins.</text>
</comment>
<comment type="subcellular location">
    <subcellularLocation>
        <location evidence="2 3">Mitochondrion</location>
    </subcellularLocation>
</comment>
<comment type="similarity">
    <text evidence="5">Belongs to the bacterial ribosomal protein bL27 family.</text>
</comment>
<keyword id="KW-0002">3D-structure</keyword>
<keyword id="KW-0496">Mitochondrion</keyword>
<keyword id="KW-1185">Reference proteome</keyword>
<keyword id="KW-0687">Ribonucleoprotein</keyword>
<keyword id="KW-0689">Ribosomal protein</keyword>
<reference key="1">
    <citation type="journal article" date="2003" name="Nature">
        <title>The genome sequence of the filamentous fungus Neurospora crassa.</title>
        <authorList>
            <person name="Galagan J.E."/>
            <person name="Calvo S.E."/>
            <person name="Borkovich K.A."/>
            <person name="Selker E.U."/>
            <person name="Read N.D."/>
            <person name="Jaffe D.B."/>
            <person name="FitzHugh W."/>
            <person name="Ma L.-J."/>
            <person name="Smirnov S."/>
            <person name="Purcell S."/>
            <person name="Rehman B."/>
            <person name="Elkins T."/>
            <person name="Engels R."/>
            <person name="Wang S."/>
            <person name="Nielsen C.B."/>
            <person name="Butler J."/>
            <person name="Endrizzi M."/>
            <person name="Qui D."/>
            <person name="Ianakiev P."/>
            <person name="Bell-Pedersen D."/>
            <person name="Nelson M.A."/>
            <person name="Werner-Washburne M."/>
            <person name="Selitrennikoff C.P."/>
            <person name="Kinsey J.A."/>
            <person name="Braun E.L."/>
            <person name="Zelter A."/>
            <person name="Schulte U."/>
            <person name="Kothe G.O."/>
            <person name="Jedd G."/>
            <person name="Mewes H.-W."/>
            <person name="Staben C."/>
            <person name="Marcotte E."/>
            <person name="Greenberg D."/>
            <person name="Roy A."/>
            <person name="Foley K."/>
            <person name="Naylor J."/>
            <person name="Stange-Thomann N."/>
            <person name="Barrett R."/>
            <person name="Gnerre S."/>
            <person name="Kamal M."/>
            <person name="Kamvysselis M."/>
            <person name="Mauceli E.W."/>
            <person name="Bielke C."/>
            <person name="Rudd S."/>
            <person name="Frishman D."/>
            <person name="Krystofova S."/>
            <person name="Rasmussen C."/>
            <person name="Metzenberg R.L."/>
            <person name="Perkins D.D."/>
            <person name="Kroken S."/>
            <person name="Cogoni C."/>
            <person name="Macino G."/>
            <person name="Catcheside D.E.A."/>
            <person name="Li W."/>
            <person name="Pratt R.J."/>
            <person name="Osmani S.A."/>
            <person name="DeSouza C.P.C."/>
            <person name="Glass N.L."/>
            <person name="Orbach M.J."/>
            <person name="Berglund J.A."/>
            <person name="Voelker R."/>
            <person name="Yarden O."/>
            <person name="Plamann M."/>
            <person name="Seiler S."/>
            <person name="Dunlap J.C."/>
            <person name="Radford A."/>
            <person name="Aramayo R."/>
            <person name="Natvig D.O."/>
            <person name="Alex L.A."/>
            <person name="Mannhaupt G."/>
            <person name="Ebbole D.J."/>
            <person name="Freitag M."/>
            <person name="Paulsen I."/>
            <person name="Sachs M.S."/>
            <person name="Lander E.S."/>
            <person name="Nusbaum C."/>
            <person name="Birren B.W."/>
        </authorList>
    </citation>
    <scope>NUCLEOTIDE SEQUENCE [LARGE SCALE GENOMIC DNA]</scope>
    <source>
        <strain>ATCC 24698 / 74-OR23-1A / CBS 708.71 / DSM 1257 / FGSC 987</strain>
    </source>
</reference>
<reference key="2">
    <citation type="journal article" date="2006" name="FEMS Microbiol. Lett.">
        <title>Identification and comparative analysis of the large subunit mitochondrial ribosomal proteins of Neurospora crassa.</title>
        <authorList>
            <person name="Gan X."/>
            <person name="Arita K."/>
            <person name="Isono S."/>
            <person name="Kitakawa M."/>
            <person name="Yoshino K."/>
            <person name="Yonezawa K."/>
            <person name="Kato A."/>
            <person name="Inoue H."/>
            <person name="Isono K."/>
        </authorList>
    </citation>
    <scope>IDENTIFICATION IN THE MITOCHONDRIAL RIBOSOMAL LARGE COMPLEX</scope>
    <scope>IDENTIFICATION BY MASS SPECTROMETRY</scope>
</reference>
<reference evidence="7 8" key="3">
    <citation type="journal article" date="2020" name="Nat. Commun.">
        <title>Analysis of translating mitoribosome reveals functional characteristics of translation in mitochondria of fungi.</title>
        <authorList>
            <person name="Itoh Y."/>
            <person name="Naschberger A."/>
            <person name="Mortezaei N."/>
            <person name="Herrmann J.M."/>
            <person name="Amunts A."/>
        </authorList>
    </citation>
    <scope>STRUCTURE BY ELECTRON MICROSCOPY (2.74 ANGSTROMS)</scope>
</reference>
<gene>
    <name type="primary">mrp7</name>
    <name type="ORF">NCU08861</name>
</gene>
<protein>
    <recommendedName>
        <fullName evidence="4">Large ribosomal subunit protein bL27m</fullName>
    </recommendedName>
</protein>
<dbReference type="EMBL" id="CM002240">
    <property type="protein sequence ID" value="EAA31755.1"/>
    <property type="molecule type" value="Genomic_DNA"/>
</dbReference>
<dbReference type="RefSeq" id="XP_960991.1">
    <property type="nucleotide sequence ID" value="XM_955898.3"/>
</dbReference>
<dbReference type="PDB" id="6YWS">
    <property type="method" value="EM"/>
    <property type="resolution" value="2.74 A"/>
    <property type="chains" value="R=1-447"/>
</dbReference>
<dbReference type="PDB" id="6YWV">
    <property type="method" value="EM"/>
    <property type="resolution" value="3.03 A"/>
    <property type="chains" value="R=1-447"/>
</dbReference>
<dbReference type="PDB" id="6YWX">
    <property type="method" value="EM"/>
    <property type="resolution" value="3.10 A"/>
    <property type="chains" value="R=1-447"/>
</dbReference>
<dbReference type="PDBsum" id="6YWS"/>
<dbReference type="PDBsum" id="6YWV"/>
<dbReference type="PDBsum" id="6YWX"/>
<dbReference type="EMDB" id="EMD-10973"/>
<dbReference type="EMDB" id="EMD-10977"/>
<dbReference type="EMDB" id="EMD-10978"/>
<dbReference type="SMR" id="Q1K730"/>
<dbReference type="STRING" id="367110.Q1K730"/>
<dbReference type="PaxDb" id="5141-EFNCRP00000008780"/>
<dbReference type="EnsemblFungi" id="EAA31755">
    <property type="protein sequence ID" value="EAA31755"/>
    <property type="gene ID" value="NCU08861"/>
</dbReference>
<dbReference type="GeneID" id="3877129"/>
<dbReference type="KEGG" id="ncr:NCU08861"/>
<dbReference type="VEuPathDB" id="FungiDB:NCU08861"/>
<dbReference type="HOGENOM" id="CLU_062495_0_1_1"/>
<dbReference type="InParanoid" id="Q1K730"/>
<dbReference type="OMA" id="LWHPGEN"/>
<dbReference type="OrthoDB" id="1867012at2759"/>
<dbReference type="Proteomes" id="UP000001805">
    <property type="component" value="Chromosome 2, Linkage Group V"/>
</dbReference>
<dbReference type="GO" id="GO:0005762">
    <property type="term" value="C:mitochondrial large ribosomal subunit"/>
    <property type="evidence" value="ECO:0000318"/>
    <property type="project" value="GO_Central"/>
</dbReference>
<dbReference type="GO" id="GO:0003735">
    <property type="term" value="F:structural constituent of ribosome"/>
    <property type="evidence" value="ECO:0000318"/>
    <property type="project" value="GO_Central"/>
</dbReference>
<dbReference type="GO" id="GO:0006412">
    <property type="term" value="P:translation"/>
    <property type="evidence" value="ECO:0007669"/>
    <property type="project" value="InterPro"/>
</dbReference>
<dbReference type="FunFam" id="2.40.50.100:FF:000042">
    <property type="entry name" value="50S ribosomal protein L27"/>
    <property type="match status" value="1"/>
</dbReference>
<dbReference type="Gene3D" id="2.40.50.100">
    <property type="match status" value="1"/>
</dbReference>
<dbReference type="InterPro" id="IPR001684">
    <property type="entry name" value="Ribosomal_bL27"/>
</dbReference>
<dbReference type="PANTHER" id="PTHR15893:SF0">
    <property type="entry name" value="LARGE RIBOSOMAL SUBUNIT PROTEIN BL27M"/>
    <property type="match status" value="1"/>
</dbReference>
<dbReference type="PANTHER" id="PTHR15893">
    <property type="entry name" value="RIBOSOMAL PROTEIN L27"/>
    <property type="match status" value="1"/>
</dbReference>
<dbReference type="Pfam" id="PF01016">
    <property type="entry name" value="Ribosomal_L27"/>
    <property type="match status" value="1"/>
</dbReference>
<dbReference type="PRINTS" id="PR00063">
    <property type="entry name" value="RIBOSOMALL27"/>
</dbReference>
<dbReference type="SUPFAM" id="SSF110324">
    <property type="entry name" value="Ribosomal L27 protein-like"/>
    <property type="match status" value="1"/>
</dbReference>
<proteinExistence type="evidence at protein level"/>
<evidence type="ECO:0000256" key="1">
    <source>
        <dbReference type="SAM" id="MobiDB-lite"/>
    </source>
</evidence>
<evidence type="ECO:0000269" key="2">
    <source>
    </source>
</evidence>
<evidence type="ECO:0000269" key="3">
    <source>
    </source>
</evidence>
<evidence type="ECO:0000303" key="4">
    <source>
    </source>
</evidence>
<evidence type="ECO:0000305" key="5"/>
<evidence type="ECO:0000305" key="6">
    <source>
    </source>
</evidence>
<evidence type="ECO:0007744" key="7">
    <source>
        <dbReference type="PDB" id="6YWS"/>
    </source>
</evidence>
<evidence type="ECO:0007744" key="8">
    <source>
        <dbReference type="PDB" id="6YWV"/>
    </source>
</evidence>
<organism>
    <name type="scientific">Neurospora crassa (strain ATCC 24698 / 74-OR23-1A / CBS 708.71 / DSM 1257 / FGSC 987)</name>
    <dbReference type="NCBI Taxonomy" id="367110"/>
    <lineage>
        <taxon>Eukaryota</taxon>
        <taxon>Fungi</taxon>
        <taxon>Dikarya</taxon>
        <taxon>Ascomycota</taxon>
        <taxon>Pezizomycotina</taxon>
        <taxon>Sordariomycetes</taxon>
        <taxon>Sordariomycetidae</taxon>
        <taxon>Sordariales</taxon>
        <taxon>Sordariaceae</taxon>
        <taxon>Neurospora</taxon>
    </lineage>
</organism>
<feature type="chain" id="PRO_0000458620" description="Large ribosomal subunit protein bL27m">
    <location>
        <begin position="1"/>
        <end position="447"/>
    </location>
</feature>
<feature type="region of interest" description="Disordered" evidence="1">
    <location>
        <begin position="377"/>
        <end position="447"/>
    </location>
</feature>
<feature type="compositionally biased region" description="Basic and acidic residues" evidence="1">
    <location>
        <begin position="377"/>
        <end position="402"/>
    </location>
</feature>
<feature type="compositionally biased region" description="Basic and acidic residues" evidence="1">
    <location>
        <begin position="409"/>
        <end position="447"/>
    </location>
</feature>